<dbReference type="EMBL" id="BC082025">
    <property type="protein sequence ID" value="AAH82025.1"/>
    <property type="molecule type" value="mRNA"/>
</dbReference>
<dbReference type="RefSeq" id="NP_001014214.1">
    <property type="nucleotide sequence ID" value="NM_001014192.1"/>
</dbReference>
<dbReference type="FunCoup" id="Q66H44">
    <property type="interactions" value="1326"/>
</dbReference>
<dbReference type="STRING" id="10116.ENSRNOP00000032295"/>
<dbReference type="GlyCosmos" id="Q66H44">
    <property type="glycosylation" value="1 site, No reported glycans"/>
</dbReference>
<dbReference type="GlyGen" id="Q66H44">
    <property type="glycosylation" value="1 site"/>
</dbReference>
<dbReference type="PhosphoSitePlus" id="Q66H44"/>
<dbReference type="PaxDb" id="10116-ENSRNOP00000032295"/>
<dbReference type="Ensembl" id="ENSRNOT00000032558.7">
    <property type="protein sequence ID" value="ENSRNOP00000032295.7"/>
    <property type="gene ID" value="ENSRNOG00000023746.7"/>
</dbReference>
<dbReference type="GeneID" id="362608"/>
<dbReference type="KEGG" id="rno:362608"/>
<dbReference type="AGR" id="RGD:1359450"/>
<dbReference type="CTD" id="55116"/>
<dbReference type="RGD" id="1359450">
    <property type="gene designation" value="Tmem39b"/>
</dbReference>
<dbReference type="eggNOG" id="KOG3828">
    <property type="taxonomic scope" value="Eukaryota"/>
</dbReference>
<dbReference type="GeneTree" id="ENSGT00390000018895"/>
<dbReference type="InParanoid" id="Q66H44"/>
<dbReference type="OrthoDB" id="30963at9989"/>
<dbReference type="PhylomeDB" id="Q66H44"/>
<dbReference type="PRO" id="PR:Q66H44"/>
<dbReference type="Proteomes" id="UP000002494">
    <property type="component" value="Chromosome 5"/>
</dbReference>
<dbReference type="GO" id="GO:0005789">
    <property type="term" value="C:endoplasmic reticulum membrane"/>
    <property type="evidence" value="ECO:0000250"/>
    <property type="project" value="UniProtKB"/>
</dbReference>
<dbReference type="GO" id="GO:0016020">
    <property type="term" value="C:membrane"/>
    <property type="evidence" value="ECO:0000318"/>
    <property type="project" value="GO_Central"/>
</dbReference>
<dbReference type="InterPro" id="IPR019397">
    <property type="entry name" value="Uncharacterised_TMEM39"/>
</dbReference>
<dbReference type="PANTHER" id="PTHR12995">
    <property type="entry name" value="FI21814P1"/>
    <property type="match status" value="1"/>
</dbReference>
<dbReference type="PANTHER" id="PTHR12995:SF2">
    <property type="entry name" value="TRANSMEMBRANE PROTEIN 39B"/>
    <property type="match status" value="1"/>
</dbReference>
<dbReference type="Pfam" id="PF10271">
    <property type="entry name" value="Tmp39"/>
    <property type="match status" value="1"/>
</dbReference>
<evidence type="ECO:0000250" key="1">
    <source>
        <dbReference type="UniProtKB" id="Q7ZW11"/>
    </source>
</evidence>
<evidence type="ECO:0000255" key="2"/>
<evidence type="ECO:0000256" key="3">
    <source>
        <dbReference type="SAM" id="MobiDB-lite"/>
    </source>
</evidence>
<evidence type="ECO:0000305" key="4"/>
<evidence type="ECO:0000312" key="5">
    <source>
        <dbReference type="RGD" id="1359450"/>
    </source>
</evidence>
<proteinExistence type="evidence at transcript level"/>
<comment type="function">
    <text evidence="1">May protect the cells against DNA damage caused by exposure to the cold-warming stress and facilitates tissue damage repair during the recovery phase.</text>
</comment>
<comment type="subcellular location">
    <subcellularLocation>
        <location evidence="1">Endoplasmic reticulum membrane</location>
        <topology evidence="2">Multi-pass membrane protein</topology>
    </subcellularLocation>
</comment>
<comment type="similarity">
    <text evidence="4">Belongs to the TMEM39 family.</text>
</comment>
<accession>Q66H44</accession>
<name>TM39B_RAT</name>
<organism>
    <name type="scientific">Rattus norvegicus</name>
    <name type="common">Rat</name>
    <dbReference type="NCBI Taxonomy" id="10116"/>
    <lineage>
        <taxon>Eukaryota</taxon>
        <taxon>Metazoa</taxon>
        <taxon>Chordata</taxon>
        <taxon>Craniata</taxon>
        <taxon>Vertebrata</taxon>
        <taxon>Euteleostomi</taxon>
        <taxon>Mammalia</taxon>
        <taxon>Eutheria</taxon>
        <taxon>Euarchontoglires</taxon>
        <taxon>Glires</taxon>
        <taxon>Rodentia</taxon>
        <taxon>Myomorpha</taxon>
        <taxon>Muroidea</taxon>
        <taxon>Muridae</taxon>
        <taxon>Murinae</taxon>
        <taxon>Rattus</taxon>
    </lineage>
</organism>
<sequence>MGGRRGPNRTSYYRNPLCEPGSSGASGGGHSSSASVSSVRSRSRTTSGTGLSSPPLAAQTVVPLQHCKIPELPVQASILFELQLFFCQLIALFVHYINIYKTVWWYPPSHPPSHTSLNFHLIDFNLLMVTTIVLGRRFIGSIVKEASQRGKVSLFRSILLFLTRFTVLTATGWSLCRSLIHLFRTYSFLNLLFLCYPFGMYIPFLQLNYDLRKTNLFSHVASMGPREAVSGLARSRDYFLTLRETWKQHTRQLYGPEAMPTHACCLSPSLIRNEVEFLKMDFNWRMKEVLVSSMLSAYYVAFVPVWFVKNTHYYDKRWSCELFLLVSISTSVILMQHLLPASYCDLLHKAAAHLGCWQKVDPALCSNVLQHPWTEECMWPQGVLVKHSKNVYKALGHYNVAIPSDVSHFRFHFFFSNPLRILNILLLLEGAVIVYQLYSLMSSEKWHQTISLALILFSNYYAFFKLLRDRLVLGKAYSYSASPQRDLDHRFS</sequence>
<gene>
    <name evidence="5" type="primary">Tmem39b</name>
</gene>
<keyword id="KW-0256">Endoplasmic reticulum</keyword>
<keyword id="KW-0325">Glycoprotein</keyword>
<keyword id="KW-0472">Membrane</keyword>
<keyword id="KW-1185">Reference proteome</keyword>
<keyword id="KW-0812">Transmembrane</keyword>
<keyword id="KW-1133">Transmembrane helix</keyword>
<feature type="chain" id="PRO_0000279234" description="Transmembrane protein 39B">
    <location>
        <begin position="1"/>
        <end position="492"/>
    </location>
</feature>
<feature type="transmembrane region" description="Helical" evidence="2">
    <location>
        <begin position="77"/>
        <end position="97"/>
    </location>
</feature>
<feature type="transmembrane region" description="Helical" evidence="2">
    <location>
        <begin position="115"/>
        <end position="135"/>
    </location>
</feature>
<feature type="transmembrane region" description="Helical" evidence="2">
    <location>
        <begin position="153"/>
        <end position="175"/>
    </location>
</feature>
<feature type="transmembrane region" description="Helical" evidence="2">
    <location>
        <begin position="185"/>
        <end position="205"/>
    </location>
</feature>
<feature type="transmembrane region" description="Helical" evidence="2">
    <location>
        <begin position="288"/>
        <end position="308"/>
    </location>
</feature>
<feature type="transmembrane region" description="Helical" evidence="2">
    <location>
        <begin position="322"/>
        <end position="342"/>
    </location>
</feature>
<feature type="transmembrane region" description="Helical" evidence="2">
    <location>
        <begin position="421"/>
        <end position="441"/>
    </location>
</feature>
<feature type="transmembrane region" description="Helical" evidence="2">
    <location>
        <begin position="447"/>
        <end position="467"/>
    </location>
</feature>
<feature type="region of interest" description="Disordered" evidence="3">
    <location>
        <begin position="1"/>
        <end position="53"/>
    </location>
</feature>
<feature type="compositionally biased region" description="Low complexity" evidence="3">
    <location>
        <begin position="31"/>
        <end position="53"/>
    </location>
</feature>
<feature type="glycosylation site" description="N-linked (GlcNAc...) asparagine" evidence="2">
    <location>
        <position position="8"/>
    </location>
</feature>
<protein>
    <recommendedName>
        <fullName evidence="4">Transmembrane protein 39B</fullName>
    </recommendedName>
</protein>
<reference key="1">
    <citation type="journal article" date="2004" name="Genome Res.">
        <title>The status, quality, and expansion of the NIH full-length cDNA project: the Mammalian Gene Collection (MGC).</title>
        <authorList>
            <consortium name="The MGC Project Team"/>
        </authorList>
    </citation>
    <scope>NUCLEOTIDE SEQUENCE [LARGE SCALE MRNA]</scope>
    <source>
        <tissue>Kidney</tissue>
    </source>
</reference>